<reference key="1">
    <citation type="journal article" date="2005" name="Nucleic Acids Res.">
        <title>Genomic blueprint of Hahella chejuensis, a marine microbe producing an algicidal agent.</title>
        <authorList>
            <person name="Jeong H."/>
            <person name="Yim J.H."/>
            <person name="Lee C."/>
            <person name="Choi S.-H."/>
            <person name="Park Y.K."/>
            <person name="Yoon S.H."/>
            <person name="Hur C.-G."/>
            <person name="Kang H.-Y."/>
            <person name="Kim D."/>
            <person name="Lee H.H."/>
            <person name="Park K.H."/>
            <person name="Park S.-H."/>
            <person name="Park H.-S."/>
            <person name="Lee H.K."/>
            <person name="Oh T.K."/>
            <person name="Kim J.F."/>
        </authorList>
    </citation>
    <scope>NUCLEOTIDE SEQUENCE [LARGE SCALE GENOMIC DNA]</scope>
    <source>
        <strain>KCTC 2396</strain>
    </source>
</reference>
<dbReference type="EC" id="7.-.-.-" evidence="1"/>
<dbReference type="EMBL" id="CP000155">
    <property type="protein sequence ID" value="ABC28729.1"/>
    <property type="molecule type" value="Genomic_DNA"/>
</dbReference>
<dbReference type="RefSeq" id="WP_011395800.1">
    <property type="nucleotide sequence ID" value="NC_007645.1"/>
</dbReference>
<dbReference type="STRING" id="349521.HCH_01893"/>
<dbReference type="KEGG" id="hch:HCH_01893"/>
<dbReference type="eggNOG" id="COG2878">
    <property type="taxonomic scope" value="Bacteria"/>
</dbReference>
<dbReference type="HOGENOM" id="CLU_063448_2_0_6"/>
<dbReference type="OrthoDB" id="9789936at2"/>
<dbReference type="Proteomes" id="UP000000238">
    <property type="component" value="Chromosome"/>
</dbReference>
<dbReference type="GO" id="GO:0005886">
    <property type="term" value="C:plasma membrane"/>
    <property type="evidence" value="ECO:0007669"/>
    <property type="project" value="UniProtKB-SubCell"/>
</dbReference>
<dbReference type="GO" id="GO:0051539">
    <property type="term" value="F:4 iron, 4 sulfur cluster binding"/>
    <property type="evidence" value="ECO:0007669"/>
    <property type="project" value="UniProtKB-UniRule"/>
</dbReference>
<dbReference type="GO" id="GO:0009055">
    <property type="term" value="F:electron transfer activity"/>
    <property type="evidence" value="ECO:0007669"/>
    <property type="project" value="InterPro"/>
</dbReference>
<dbReference type="GO" id="GO:0046872">
    <property type="term" value="F:metal ion binding"/>
    <property type="evidence" value="ECO:0007669"/>
    <property type="project" value="UniProtKB-KW"/>
</dbReference>
<dbReference type="GO" id="GO:0022900">
    <property type="term" value="P:electron transport chain"/>
    <property type="evidence" value="ECO:0007669"/>
    <property type="project" value="UniProtKB-UniRule"/>
</dbReference>
<dbReference type="FunFam" id="1.10.15.40:FF:000001">
    <property type="entry name" value="Ion-translocating oxidoreductase complex subunit B"/>
    <property type="match status" value="1"/>
</dbReference>
<dbReference type="Gene3D" id="3.30.70.20">
    <property type="match status" value="1"/>
</dbReference>
<dbReference type="Gene3D" id="1.10.15.40">
    <property type="entry name" value="Electron transport complex subunit B, putative Fe-S cluster"/>
    <property type="match status" value="1"/>
</dbReference>
<dbReference type="HAMAP" id="MF_00463">
    <property type="entry name" value="RsxB_RnfB"/>
    <property type="match status" value="1"/>
</dbReference>
<dbReference type="InterPro" id="IPR007202">
    <property type="entry name" value="4Fe-4S_dom"/>
</dbReference>
<dbReference type="InterPro" id="IPR017896">
    <property type="entry name" value="4Fe4S_Fe-S-bd"/>
</dbReference>
<dbReference type="InterPro" id="IPR017900">
    <property type="entry name" value="4Fe4S_Fe_S_CS"/>
</dbReference>
<dbReference type="InterPro" id="IPR010207">
    <property type="entry name" value="Elect_transpt_cplx_RnfB/RsxB"/>
</dbReference>
<dbReference type="InterPro" id="IPR016463">
    <property type="entry name" value="RnfB/RsxB_Proteobac"/>
</dbReference>
<dbReference type="InterPro" id="IPR050294">
    <property type="entry name" value="RnfB_subfamily"/>
</dbReference>
<dbReference type="NCBIfam" id="NF003475">
    <property type="entry name" value="PRK05113.1"/>
    <property type="match status" value="1"/>
</dbReference>
<dbReference type="NCBIfam" id="TIGR01944">
    <property type="entry name" value="rnfB"/>
    <property type="match status" value="1"/>
</dbReference>
<dbReference type="PANTHER" id="PTHR42859:SF3">
    <property type="entry name" value="ION-TRANSLOCATING OXIDOREDUCTASE COMPLEX SUBUNIT B"/>
    <property type="match status" value="1"/>
</dbReference>
<dbReference type="PANTHER" id="PTHR42859">
    <property type="entry name" value="OXIDOREDUCTASE"/>
    <property type="match status" value="1"/>
</dbReference>
<dbReference type="Pfam" id="PF14697">
    <property type="entry name" value="Fer4_21"/>
    <property type="match status" value="1"/>
</dbReference>
<dbReference type="Pfam" id="PF04060">
    <property type="entry name" value="FeS"/>
    <property type="match status" value="1"/>
</dbReference>
<dbReference type="PIRSF" id="PIRSF005784">
    <property type="entry name" value="Elect_transpt_RnfB"/>
    <property type="match status" value="1"/>
</dbReference>
<dbReference type="SUPFAM" id="SSF54862">
    <property type="entry name" value="4Fe-4S ferredoxins"/>
    <property type="match status" value="1"/>
</dbReference>
<dbReference type="PROSITE" id="PS51656">
    <property type="entry name" value="4FE4S"/>
    <property type="match status" value="1"/>
</dbReference>
<dbReference type="PROSITE" id="PS00198">
    <property type="entry name" value="4FE4S_FER_1"/>
    <property type="match status" value="2"/>
</dbReference>
<dbReference type="PROSITE" id="PS51379">
    <property type="entry name" value="4FE4S_FER_2"/>
    <property type="match status" value="2"/>
</dbReference>
<keyword id="KW-0004">4Fe-4S</keyword>
<keyword id="KW-0997">Cell inner membrane</keyword>
<keyword id="KW-1003">Cell membrane</keyword>
<keyword id="KW-0249">Electron transport</keyword>
<keyword id="KW-0408">Iron</keyword>
<keyword id="KW-0411">Iron-sulfur</keyword>
<keyword id="KW-0472">Membrane</keyword>
<keyword id="KW-0479">Metal-binding</keyword>
<keyword id="KW-1185">Reference proteome</keyword>
<keyword id="KW-0677">Repeat</keyword>
<keyword id="KW-1278">Translocase</keyword>
<keyword id="KW-0813">Transport</keyword>
<organism>
    <name type="scientific">Hahella chejuensis (strain KCTC 2396)</name>
    <dbReference type="NCBI Taxonomy" id="349521"/>
    <lineage>
        <taxon>Bacteria</taxon>
        <taxon>Pseudomonadati</taxon>
        <taxon>Pseudomonadota</taxon>
        <taxon>Gammaproteobacteria</taxon>
        <taxon>Oceanospirillales</taxon>
        <taxon>Hahellaceae</taxon>
        <taxon>Hahella</taxon>
    </lineage>
</organism>
<gene>
    <name evidence="1" type="primary">rnfB</name>
    <name type="ordered locus">HCH_01893</name>
</gene>
<feature type="chain" id="PRO_1000013648" description="Ion-translocating oxidoreductase complex subunit B">
    <location>
        <begin position="1"/>
        <end position="197"/>
    </location>
</feature>
<feature type="domain" description="4Fe-4S" evidence="1">
    <location>
        <begin position="32"/>
        <end position="90"/>
    </location>
</feature>
<feature type="domain" description="4Fe-4S ferredoxin-type 1" evidence="1">
    <location>
        <begin position="106"/>
        <end position="135"/>
    </location>
</feature>
<feature type="domain" description="4Fe-4S ferredoxin-type 2" evidence="1">
    <location>
        <begin position="136"/>
        <end position="165"/>
    </location>
</feature>
<feature type="region of interest" description="Hydrophobic" evidence="1">
    <location>
        <begin position="1"/>
        <end position="26"/>
    </location>
</feature>
<feature type="binding site" evidence="1">
    <location>
        <position position="49"/>
    </location>
    <ligand>
        <name>[4Fe-4S] cluster</name>
        <dbReference type="ChEBI" id="CHEBI:49883"/>
        <label>1</label>
    </ligand>
</feature>
<feature type="binding site" evidence="1">
    <location>
        <position position="52"/>
    </location>
    <ligand>
        <name>[4Fe-4S] cluster</name>
        <dbReference type="ChEBI" id="CHEBI:49883"/>
        <label>1</label>
    </ligand>
</feature>
<feature type="binding site" evidence="1">
    <location>
        <position position="57"/>
    </location>
    <ligand>
        <name>[4Fe-4S] cluster</name>
        <dbReference type="ChEBI" id="CHEBI:49883"/>
        <label>1</label>
    </ligand>
</feature>
<feature type="binding site" evidence="1">
    <location>
        <position position="73"/>
    </location>
    <ligand>
        <name>[4Fe-4S] cluster</name>
        <dbReference type="ChEBI" id="CHEBI:49883"/>
        <label>1</label>
    </ligand>
</feature>
<feature type="binding site" evidence="1">
    <location>
        <position position="115"/>
    </location>
    <ligand>
        <name>[4Fe-4S] cluster</name>
        <dbReference type="ChEBI" id="CHEBI:49883"/>
        <label>2</label>
    </ligand>
</feature>
<feature type="binding site" evidence="1">
    <location>
        <position position="118"/>
    </location>
    <ligand>
        <name>[4Fe-4S] cluster</name>
        <dbReference type="ChEBI" id="CHEBI:49883"/>
        <label>2</label>
    </ligand>
</feature>
<feature type="binding site" evidence="1">
    <location>
        <position position="121"/>
    </location>
    <ligand>
        <name>[4Fe-4S] cluster</name>
        <dbReference type="ChEBI" id="CHEBI:49883"/>
        <label>2</label>
    </ligand>
</feature>
<feature type="binding site" evidence="1">
    <location>
        <position position="125"/>
    </location>
    <ligand>
        <name>[4Fe-4S] cluster</name>
        <dbReference type="ChEBI" id="CHEBI:49883"/>
        <label>3</label>
    </ligand>
</feature>
<feature type="binding site" evidence="1">
    <location>
        <position position="145"/>
    </location>
    <ligand>
        <name>[4Fe-4S] cluster</name>
        <dbReference type="ChEBI" id="CHEBI:49883"/>
        <label>3</label>
    </ligand>
</feature>
<feature type="binding site" evidence="1">
    <location>
        <position position="148"/>
    </location>
    <ligand>
        <name>[4Fe-4S] cluster</name>
        <dbReference type="ChEBI" id="CHEBI:49883"/>
        <label>3</label>
    </ligand>
</feature>
<feature type="binding site" evidence="1">
    <location>
        <position position="151"/>
    </location>
    <ligand>
        <name>[4Fe-4S] cluster</name>
        <dbReference type="ChEBI" id="CHEBI:49883"/>
        <label>3</label>
    </ligand>
</feature>
<feature type="binding site" evidence="1">
    <location>
        <position position="155"/>
    </location>
    <ligand>
        <name>[4Fe-4S] cluster</name>
        <dbReference type="ChEBI" id="CHEBI:49883"/>
        <label>2</label>
    </ligand>
</feature>
<comment type="function">
    <text evidence="1">Part of a membrane-bound complex that couples electron transfer with translocation of ions across the membrane.</text>
</comment>
<comment type="cofactor">
    <cofactor evidence="1">
        <name>[4Fe-4S] cluster</name>
        <dbReference type="ChEBI" id="CHEBI:49883"/>
    </cofactor>
    <text evidence="1">Binds 3 [4Fe-4S] clusters.</text>
</comment>
<comment type="subunit">
    <text evidence="1">The complex is composed of six subunits: RnfA, RnfB, RnfC, RnfD, RnfE and RnfG.</text>
</comment>
<comment type="subcellular location">
    <subcellularLocation>
        <location evidence="1">Cell inner membrane</location>
    </subcellularLocation>
</comment>
<comment type="similarity">
    <text evidence="1">Belongs to the 4Fe4S bacterial-type ferredoxin family. RnfB subfamily.</text>
</comment>
<protein>
    <recommendedName>
        <fullName evidence="1">Ion-translocating oxidoreductase complex subunit B</fullName>
        <ecNumber evidence="1">7.-.-.-</ecNumber>
    </recommendedName>
    <alternativeName>
        <fullName evidence="1">Rnf electron transport complex subunit B</fullName>
    </alternativeName>
</protein>
<accession>Q2SKU5</accession>
<evidence type="ECO:0000255" key="1">
    <source>
        <dbReference type="HAMAP-Rule" id="MF_00463"/>
    </source>
</evidence>
<sequence length="197" mass="20447">MSIVIIAVLALSALALTFGAVLGFASIKFKVEGNPIVDQIDGLLPQTQCGQCGYPGCRPYAEAIANGDAINKCPPGGEATITALADLLDVEAVPLDSEHGESKGKQVAYIREDECIGCTKCIQACPVDAILGAAKQMHTVIVSECTGCDLCVEPCPVDCIDMIPAPSGIRDWAWDMPKPPVSSGAIIATDQNNGMAA</sequence>
<proteinExistence type="inferred from homology"/>
<name>RNFB_HAHCH</name>